<sequence length="901" mass="102594">MSILTRIFGSRNERVLRKLKKQVVKINKMEPAFEALSDDELKAKTQEFRDRLSGGETLQQILPEAFATVREASKRVLGMRHFDVQLIGGMVLTNRCIAEMRTGEGKTLTATLPCYLIALEGKGVHVVTVNDYLARRDAETNRPLFEFLGMSVGVNIPGLSPEEKRAAYAADITYATNSELGFDYLRDNLAHSKEERFQRTLGYALVDEVDSILIDEARTPLIISGQAENSSELYIAVNKLIPSLIKQEKEDTEEYQGEGDFTLDLKSKQAHLTERGQEKVEDWLITQGLMPEGDSLYSPSRIVLLHHVMAALRAHTLFEKDVDYIVKDGEIVIVDEHTGRTMAGRRWSDGLHQAIEAKEGVDVKSENQTVASISYQNYFRLYERLAGMTGTADTEAFEFQQIYGLETVVIPTNRPMIRDDRTDVMFENEQYKFNAIIEDIKDCVERQQPVLVGTISVEKSEELSKALDKAGIKHNVLNAKFHQQEAEIVAEAGFPSAVTIATNMAGRGTDIILGGNWKAQAAKLENPTQEQIEALKAEWEKNHEIVMKAGGLHIIGTERHESRRIDNQLRGRSGRQGDPGSSRFYLSLEDGLMRIYLNEGKLNLMRKAFTVAGEAMESKMLAKVIASAQAKVEAFHFDGRKNLLEYDDVANDQRHAIYEQRNHLLDNDDISETINAIRHDVFNGVIDQYIPPQSLEEQWDIKGLEERLSQEFGMELPISNWLEEDNNLHEESLCERIVEIAEKEYKEKEALVGEDAMRHFEKGVMLQTLDELWKEHLASMDYLRQGIHLRGYAQKDPKQEYKKESFRMFTEMLDSLKHQVITTLTRVRVRTQEEMEEAERARQEMAARINQNNLPVDENSQTTQNSETEDYSDRRIGRNEPCPCGSGKKYKHCHGSRVARQ</sequence>
<reference key="1">
    <citation type="journal article" date="2005" name="J. Bacteriol.">
        <title>Genomic sequence of an otitis media isolate of nontypeable Haemophilus influenzae: comparative study with H. influenzae serotype d, strain KW20.</title>
        <authorList>
            <person name="Harrison A."/>
            <person name="Dyer D.W."/>
            <person name="Gillaspy A."/>
            <person name="Ray W.C."/>
            <person name="Mungur R."/>
            <person name="Carson M.B."/>
            <person name="Zhong H."/>
            <person name="Gipson J."/>
            <person name="Gipson M."/>
            <person name="Johnson L.S."/>
            <person name="Lewis L."/>
            <person name="Bakaletz L.O."/>
            <person name="Munson R.S. Jr."/>
        </authorList>
    </citation>
    <scope>NUCLEOTIDE SEQUENCE [LARGE SCALE GENOMIC DNA]</scope>
    <source>
        <strain>86-028NP</strain>
    </source>
</reference>
<name>SECA_HAEI8</name>
<feature type="chain" id="PRO_1000073472" description="Protein translocase subunit SecA">
    <location>
        <begin position="1"/>
        <end position="901"/>
    </location>
</feature>
<feature type="region of interest" description="Disordered" evidence="2">
    <location>
        <begin position="848"/>
        <end position="901"/>
    </location>
</feature>
<feature type="compositionally biased region" description="Polar residues" evidence="2">
    <location>
        <begin position="849"/>
        <end position="866"/>
    </location>
</feature>
<feature type="compositionally biased region" description="Basic residues" evidence="2">
    <location>
        <begin position="888"/>
        <end position="901"/>
    </location>
</feature>
<feature type="binding site" evidence="1">
    <location>
        <position position="85"/>
    </location>
    <ligand>
        <name>ATP</name>
        <dbReference type="ChEBI" id="CHEBI:30616"/>
    </ligand>
</feature>
<feature type="binding site" evidence="1">
    <location>
        <begin position="103"/>
        <end position="107"/>
    </location>
    <ligand>
        <name>ATP</name>
        <dbReference type="ChEBI" id="CHEBI:30616"/>
    </ligand>
</feature>
<feature type="binding site" evidence="1">
    <location>
        <position position="510"/>
    </location>
    <ligand>
        <name>ATP</name>
        <dbReference type="ChEBI" id="CHEBI:30616"/>
    </ligand>
</feature>
<feature type="binding site" evidence="1">
    <location>
        <position position="882"/>
    </location>
    <ligand>
        <name>Zn(2+)</name>
        <dbReference type="ChEBI" id="CHEBI:29105"/>
    </ligand>
</feature>
<feature type="binding site" evidence="1">
    <location>
        <position position="884"/>
    </location>
    <ligand>
        <name>Zn(2+)</name>
        <dbReference type="ChEBI" id="CHEBI:29105"/>
    </ligand>
</feature>
<feature type="binding site" evidence="1">
    <location>
        <position position="893"/>
    </location>
    <ligand>
        <name>Zn(2+)</name>
        <dbReference type="ChEBI" id="CHEBI:29105"/>
    </ligand>
</feature>
<feature type="binding site" evidence="1">
    <location>
        <position position="894"/>
    </location>
    <ligand>
        <name>Zn(2+)</name>
        <dbReference type="ChEBI" id="CHEBI:29105"/>
    </ligand>
</feature>
<evidence type="ECO:0000255" key="1">
    <source>
        <dbReference type="HAMAP-Rule" id="MF_01382"/>
    </source>
</evidence>
<evidence type="ECO:0000256" key="2">
    <source>
        <dbReference type="SAM" id="MobiDB-lite"/>
    </source>
</evidence>
<protein>
    <recommendedName>
        <fullName evidence="1">Protein translocase subunit SecA</fullName>
        <ecNumber evidence="1">7.4.2.8</ecNumber>
    </recommendedName>
</protein>
<keyword id="KW-0067">ATP-binding</keyword>
<keyword id="KW-0997">Cell inner membrane</keyword>
<keyword id="KW-1003">Cell membrane</keyword>
<keyword id="KW-0963">Cytoplasm</keyword>
<keyword id="KW-0472">Membrane</keyword>
<keyword id="KW-0479">Metal-binding</keyword>
<keyword id="KW-0547">Nucleotide-binding</keyword>
<keyword id="KW-0653">Protein transport</keyword>
<keyword id="KW-1278">Translocase</keyword>
<keyword id="KW-0811">Translocation</keyword>
<keyword id="KW-0813">Transport</keyword>
<keyword id="KW-0862">Zinc</keyword>
<proteinExistence type="inferred from homology"/>
<gene>
    <name evidence="1" type="primary">secA</name>
    <name type="ordered locus">NTHI1076</name>
</gene>
<dbReference type="EC" id="7.4.2.8" evidence="1"/>
<dbReference type="EMBL" id="CP000057">
    <property type="protein sequence ID" value="AAX87947.1"/>
    <property type="molecule type" value="Genomic_DNA"/>
</dbReference>
<dbReference type="RefSeq" id="WP_011272282.1">
    <property type="nucleotide sequence ID" value="NC_007146.2"/>
</dbReference>
<dbReference type="SMR" id="Q4QM00"/>
<dbReference type="KEGG" id="hit:NTHI1076"/>
<dbReference type="HOGENOM" id="CLU_005314_3_0_6"/>
<dbReference type="Proteomes" id="UP000002525">
    <property type="component" value="Chromosome"/>
</dbReference>
<dbReference type="GO" id="GO:0031522">
    <property type="term" value="C:cell envelope Sec protein transport complex"/>
    <property type="evidence" value="ECO:0007669"/>
    <property type="project" value="TreeGrafter"/>
</dbReference>
<dbReference type="GO" id="GO:0005829">
    <property type="term" value="C:cytosol"/>
    <property type="evidence" value="ECO:0007669"/>
    <property type="project" value="TreeGrafter"/>
</dbReference>
<dbReference type="GO" id="GO:0005886">
    <property type="term" value="C:plasma membrane"/>
    <property type="evidence" value="ECO:0007669"/>
    <property type="project" value="UniProtKB-SubCell"/>
</dbReference>
<dbReference type="GO" id="GO:0005524">
    <property type="term" value="F:ATP binding"/>
    <property type="evidence" value="ECO:0007669"/>
    <property type="project" value="UniProtKB-UniRule"/>
</dbReference>
<dbReference type="GO" id="GO:0046872">
    <property type="term" value="F:metal ion binding"/>
    <property type="evidence" value="ECO:0007669"/>
    <property type="project" value="UniProtKB-KW"/>
</dbReference>
<dbReference type="GO" id="GO:0008564">
    <property type="term" value="F:protein-exporting ATPase activity"/>
    <property type="evidence" value="ECO:0007669"/>
    <property type="project" value="UniProtKB-EC"/>
</dbReference>
<dbReference type="GO" id="GO:0065002">
    <property type="term" value="P:intracellular protein transmembrane transport"/>
    <property type="evidence" value="ECO:0007669"/>
    <property type="project" value="UniProtKB-UniRule"/>
</dbReference>
<dbReference type="GO" id="GO:0017038">
    <property type="term" value="P:protein import"/>
    <property type="evidence" value="ECO:0007669"/>
    <property type="project" value="InterPro"/>
</dbReference>
<dbReference type="GO" id="GO:0006605">
    <property type="term" value="P:protein targeting"/>
    <property type="evidence" value="ECO:0007669"/>
    <property type="project" value="UniProtKB-UniRule"/>
</dbReference>
<dbReference type="GO" id="GO:0043952">
    <property type="term" value="P:protein transport by the Sec complex"/>
    <property type="evidence" value="ECO:0007669"/>
    <property type="project" value="TreeGrafter"/>
</dbReference>
<dbReference type="CDD" id="cd17928">
    <property type="entry name" value="DEXDc_SecA"/>
    <property type="match status" value="1"/>
</dbReference>
<dbReference type="CDD" id="cd18803">
    <property type="entry name" value="SF2_C_secA"/>
    <property type="match status" value="1"/>
</dbReference>
<dbReference type="FunFam" id="1.10.3060.10:FF:000001">
    <property type="entry name" value="Preprotein translocase subunit SecA"/>
    <property type="match status" value="1"/>
</dbReference>
<dbReference type="FunFam" id="3.40.50.300:FF:000113">
    <property type="entry name" value="Preprotein translocase subunit SecA"/>
    <property type="match status" value="1"/>
</dbReference>
<dbReference type="FunFam" id="3.90.1440.10:FF:000001">
    <property type="entry name" value="Preprotein translocase subunit SecA"/>
    <property type="match status" value="1"/>
</dbReference>
<dbReference type="Gene3D" id="1.10.3060.10">
    <property type="entry name" value="Helical scaffold and wing domains of SecA"/>
    <property type="match status" value="1"/>
</dbReference>
<dbReference type="Gene3D" id="3.40.50.300">
    <property type="entry name" value="P-loop containing nucleotide triphosphate hydrolases"/>
    <property type="match status" value="2"/>
</dbReference>
<dbReference type="Gene3D" id="3.90.1440.10">
    <property type="entry name" value="SecA, preprotein cross-linking domain"/>
    <property type="match status" value="1"/>
</dbReference>
<dbReference type="HAMAP" id="MF_01382">
    <property type="entry name" value="SecA"/>
    <property type="match status" value="1"/>
</dbReference>
<dbReference type="InterPro" id="IPR014001">
    <property type="entry name" value="Helicase_ATP-bd"/>
</dbReference>
<dbReference type="InterPro" id="IPR001650">
    <property type="entry name" value="Helicase_C-like"/>
</dbReference>
<dbReference type="InterPro" id="IPR027417">
    <property type="entry name" value="P-loop_NTPase"/>
</dbReference>
<dbReference type="InterPro" id="IPR004027">
    <property type="entry name" value="SEC_C_motif"/>
</dbReference>
<dbReference type="InterPro" id="IPR000185">
    <property type="entry name" value="SecA"/>
</dbReference>
<dbReference type="InterPro" id="IPR020937">
    <property type="entry name" value="SecA_CS"/>
</dbReference>
<dbReference type="InterPro" id="IPR011115">
    <property type="entry name" value="SecA_DEAD"/>
</dbReference>
<dbReference type="InterPro" id="IPR014018">
    <property type="entry name" value="SecA_motor_DEAD"/>
</dbReference>
<dbReference type="InterPro" id="IPR011130">
    <property type="entry name" value="SecA_preprotein_X-link_dom"/>
</dbReference>
<dbReference type="InterPro" id="IPR044722">
    <property type="entry name" value="SecA_SF2_C"/>
</dbReference>
<dbReference type="InterPro" id="IPR011116">
    <property type="entry name" value="SecA_Wing/Scaffold"/>
</dbReference>
<dbReference type="InterPro" id="IPR036266">
    <property type="entry name" value="SecA_Wing/Scaffold_sf"/>
</dbReference>
<dbReference type="InterPro" id="IPR036670">
    <property type="entry name" value="SecA_X-link_sf"/>
</dbReference>
<dbReference type="NCBIfam" id="NF009538">
    <property type="entry name" value="PRK12904.1"/>
    <property type="match status" value="1"/>
</dbReference>
<dbReference type="NCBIfam" id="TIGR00963">
    <property type="entry name" value="secA"/>
    <property type="match status" value="1"/>
</dbReference>
<dbReference type="PANTHER" id="PTHR30612:SF0">
    <property type="entry name" value="CHLOROPLAST PROTEIN-TRANSPORTING ATPASE"/>
    <property type="match status" value="1"/>
</dbReference>
<dbReference type="PANTHER" id="PTHR30612">
    <property type="entry name" value="SECA INNER MEMBRANE COMPONENT OF SEC PROTEIN SECRETION SYSTEM"/>
    <property type="match status" value="1"/>
</dbReference>
<dbReference type="Pfam" id="PF21090">
    <property type="entry name" value="P-loop_SecA"/>
    <property type="match status" value="1"/>
</dbReference>
<dbReference type="Pfam" id="PF02810">
    <property type="entry name" value="SEC-C"/>
    <property type="match status" value="1"/>
</dbReference>
<dbReference type="Pfam" id="PF07517">
    <property type="entry name" value="SecA_DEAD"/>
    <property type="match status" value="1"/>
</dbReference>
<dbReference type="Pfam" id="PF01043">
    <property type="entry name" value="SecA_PP_bind"/>
    <property type="match status" value="1"/>
</dbReference>
<dbReference type="Pfam" id="PF07516">
    <property type="entry name" value="SecA_SW"/>
    <property type="match status" value="1"/>
</dbReference>
<dbReference type="PRINTS" id="PR00906">
    <property type="entry name" value="SECA"/>
</dbReference>
<dbReference type="SMART" id="SM00957">
    <property type="entry name" value="SecA_DEAD"/>
    <property type="match status" value="1"/>
</dbReference>
<dbReference type="SMART" id="SM00958">
    <property type="entry name" value="SecA_PP_bind"/>
    <property type="match status" value="1"/>
</dbReference>
<dbReference type="SUPFAM" id="SSF81886">
    <property type="entry name" value="Helical scaffold and wing domains of SecA"/>
    <property type="match status" value="1"/>
</dbReference>
<dbReference type="SUPFAM" id="SSF52540">
    <property type="entry name" value="P-loop containing nucleoside triphosphate hydrolases"/>
    <property type="match status" value="2"/>
</dbReference>
<dbReference type="SUPFAM" id="SSF81767">
    <property type="entry name" value="Pre-protein crosslinking domain of SecA"/>
    <property type="match status" value="1"/>
</dbReference>
<dbReference type="PROSITE" id="PS01312">
    <property type="entry name" value="SECA"/>
    <property type="match status" value="1"/>
</dbReference>
<dbReference type="PROSITE" id="PS51196">
    <property type="entry name" value="SECA_MOTOR_DEAD"/>
    <property type="match status" value="1"/>
</dbReference>
<comment type="function">
    <text evidence="1">Part of the Sec protein translocase complex. Interacts with the SecYEG preprotein conducting channel. Has a central role in coupling the hydrolysis of ATP to the transfer of proteins into and across the cell membrane, serving both as a receptor for the preprotein-SecB complex and as an ATP-driven molecular motor driving the stepwise translocation of polypeptide chains across the membrane.</text>
</comment>
<comment type="catalytic activity">
    <reaction evidence="1">
        <text>ATP + H2O + cellular proteinSide 1 = ADP + phosphate + cellular proteinSide 2.</text>
        <dbReference type="EC" id="7.4.2.8"/>
    </reaction>
</comment>
<comment type="cofactor">
    <cofactor evidence="1">
        <name>Zn(2+)</name>
        <dbReference type="ChEBI" id="CHEBI:29105"/>
    </cofactor>
    <text evidence="1">May bind 1 zinc ion per subunit.</text>
</comment>
<comment type="subunit">
    <text evidence="1">Monomer and homodimer. Part of the essential Sec protein translocation apparatus which comprises SecA, SecYEG and auxiliary proteins SecDF-YajC and YidC.</text>
</comment>
<comment type="subcellular location">
    <subcellularLocation>
        <location evidence="1">Cell inner membrane</location>
        <topology evidence="1">Peripheral membrane protein</topology>
        <orientation evidence="1">Cytoplasmic side</orientation>
    </subcellularLocation>
    <subcellularLocation>
        <location evidence="1">Cytoplasm</location>
    </subcellularLocation>
    <text evidence="1">Distribution is 50-50.</text>
</comment>
<comment type="similarity">
    <text evidence="1">Belongs to the SecA family.</text>
</comment>
<organism>
    <name type="scientific">Haemophilus influenzae (strain 86-028NP)</name>
    <dbReference type="NCBI Taxonomy" id="281310"/>
    <lineage>
        <taxon>Bacteria</taxon>
        <taxon>Pseudomonadati</taxon>
        <taxon>Pseudomonadota</taxon>
        <taxon>Gammaproteobacteria</taxon>
        <taxon>Pasteurellales</taxon>
        <taxon>Pasteurellaceae</taxon>
        <taxon>Haemophilus</taxon>
    </lineage>
</organism>
<accession>Q4QM00</accession>